<protein>
    <recommendedName>
        <fullName>LIMR family protein DDB_G0293610</fullName>
    </recommendedName>
</protein>
<dbReference type="EMBL" id="AAFI02000218">
    <property type="protein sequence ID" value="EAL60617.1"/>
    <property type="molecule type" value="Genomic_DNA"/>
</dbReference>
<dbReference type="RefSeq" id="XP_629046.1">
    <property type="nucleotide sequence ID" value="XM_629044.1"/>
</dbReference>
<dbReference type="SMR" id="Q54BI3"/>
<dbReference type="FunCoup" id="Q54BI3">
    <property type="interactions" value="5"/>
</dbReference>
<dbReference type="STRING" id="44689.Q54BI3"/>
<dbReference type="PaxDb" id="44689-DDB0304472"/>
<dbReference type="EnsemblProtists" id="EAL60617">
    <property type="protein sequence ID" value="EAL60617"/>
    <property type="gene ID" value="DDB_G0293610"/>
</dbReference>
<dbReference type="GeneID" id="8629334"/>
<dbReference type="KEGG" id="ddi:DDB_G0293610"/>
<dbReference type="dictyBase" id="DDB_G0293610"/>
<dbReference type="VEuPathDB" id="AmoebaDB:DDB_G0293610"/>
<dbReference type="eggNOG" id="ENOG502QPKQ">
    <property type="taxonomic scope" value="Eukaryota"/>
</dbReference>
<dbReference type="HOGENOM" id="CLU_026480_2_0_1"/>
<dbReference type="InParanoid" id="Q54BI3"/>
<dbReference type="OMA" id="KSAMCWV"/>
<dbReference type="PhylomeDB" id="Q54BI3"/>
<dbReference type="PRO" id="PR:Q54BI3"/>
<dbReference type="Proteomes" id="UP000002195">
    <property type="component" value="Chromosome 6"/>
</dbReference>
<dbReference type="GO" id="GO:0016020">
    <property type="term" value="C:membrane"/>
    <property type="evidence" value="ECO:0007669"/>
    <property type="project" value="UniProtKB-SubCell"/>
</dbReference>
<dbReference type="InterPro" id="IPR006876">
    <property type="entry name" value="LMBR1-like_membr_prot"/>
</dbReference>
<dbReference type="PANTHER" id="PTHR31652">
    <property type="entry name" value="LIMR FAMILY PROTEIN DDB_G0283707-RELATED"/>
    <property type="match status" value="1"/>
</dbReference>
<dbReference type="PANTHER" id="PTHR31652:SF0">
    <property type="entry name" value="LIMR FAMILY PROTEIN DDB_G0283707-RELATED"/>
    <property type="match status" value="1"/>
</dbReference>
<dbReference type="Pfam" id="PF04791">
    <property type="entry name" value="LMBR1"/>
    <property type="match status" value="2"/>
</dbReference>
<organism>
    <name type="scientific">Dictyostelium discoideum</name>
    <name type="common">Social amoeba</name>
    <dbReference type="NCBI Taxonomy" id="44689"/>
    <lineage>
        <taxon>Eukaryota</taxon>
        <taxon>Amoebozoa</taxon>
        <taxon>Evosea</taxon>
        <taxon>Eumycetozoa</taxon>
        <taxon>Dictyostelia</taxon>
        <taxon>Dictyosteliales</taxon>
        <taxon>Dictyosteliaceae</taxon>
        <taxon>Dictyostelium</taxon>
    </lineage>
</organism>
<sequence>MVNIFLIIVAVVIPALVALGSLYLIAYFQHPDDKNVAYFPKIIVILGITLAATSILMLPLDVANQGGKGGFPMDILWIVIYIVVAVFAIVICPFAMFFYESEEADPAAGSQIAGAFKGTFAILFAFAALTIVLYVFFGVAEIPTIVILSRFQIINYPIATDSINITTTLPEIASIVGGGNDKIKLDPGNPELLGNGSEYVEYRLDKEFLQFRVSIALFIITMVAFFGWLLFIIFGGIGLVALPFDMITDFKNRPQRIPYDKYLERKKKIGERATELVDVGKTIQSRTTGGIMSKRDRRNYNRFRQAIFLLEEDYERLKISYKRQGGKVILYYAQFFGGFIALGVSLGWLLHIIIYMITAPEPFHPFLNSLVISLNNAWGFLGVIVYGLLSFYLLFCVVKGNFKFGLRLFFLFPIHPMRVGNTMMNAFLFNVGLILITSVSITHFCTMAFSQFTSTTSINSLFETAVKNLKILKWFWVVYIFAIFAMSILTAIFLFIKPKDKPARIRV</sequence>
<feature type="chain" id="PRO_0000370853" description="LIMR family protein DDB_G0293610">
    <location>
        <begin position="1"/>
        <end position="507"/>
    </location>
</feature>
<feature type="transmembrane region" description="Helical" evidence="1">
    <location>
        <begin position="4"/>
        <end position="24"/>
    </location>
</feature>
<feature type="transmembrane region" description="Helical" evidence="1">
    <location>
        <begin position="42"/>
        <end position="62"/>
    </location>
</feature>
<feature type="transmembrane region" description="Helical" evidence="1">
    <location>
        <begin position="75"/>
        <end position="95"/>
    </location>
</feature>
<feature type="transmembrane region" description="Helical" evidence="1">
    <location>
        <begin position="120"/>
        <end position="140"/>
    </location>
</feature>
<feature type="transmembrane region" description="Helical" evidence="1">
    <location>
        <begin position="215"/>
        <end position="235"/>
    </location>
</feature>
<feature type="transmembrane region" description="Helical" evidence="1">
    <location>
        <begin position="335"/>
        <end position="355"/>
    </location>
</feature>
<feature type="transmembrane region" description="Helical" evidence="1">
    <location>
        <begin position="378"/>
        <end position="398"/>
    </location>
</feature>
<feature type="transmembrane region" description="Helical" evidence="1">
    <location>
        <begin position="427"/>
        <end position="447"/>
    </location>
</feature>
<feature type="transmembrane region" description="Helical" evidence="1">
    <location>
        <begin position="476"/>
        <end position="496"/>
    </location>
</feature>
<comment type="subcellular location">
    <subcellularLocation>
        <location evidence="2">Membrane</location>
        <topology evidence="2">Multi-pass membrane protein</topology>
    </subcellularLocation>
</comment>
<comment type="similarity">
    <text evidence="2">Belongs to the LIMR family.</text>
</comment>
<keyword id="KW-0472">Membrane</keyword>
<keyword id="KW-1185">Reference proteome</keyword>
<keyword id="KW-0812">Transmembrane</keyword>
<keyword id="KW-1133">Transmembrane helix</keyword>
<gene>
    <name type="ORF">DDB_G0293610</name>
</gene>
<evidence type="ECO:0000255" key="1"/>
<evidence type="ECO:0000305" key="2"/>
<accession>Q54BI3</accession>
<proteinExistence type="inferred from homology"/>
<name>Y3610_DICDI</name>
<reference key="1">
    <citation type="journal article" date="2005" name="Nature">
        <title>The genome of the social amoeba Dictyostelium discoideum.</title>
        <authorList>
            <person name="Eichinger L."/>
            <person name="Pachebat J.A."/>
            <person name="Gloeckner G."/>
            <person name="Rajandream M.A."/>
            <person name="Sucgang R."/>
            <person name="Berriman M."/>
            <person name="Song J."/>
            <person name="Olsen R."/>
            <person name="Szafranski K."/>
            <person name="Xu Q."/>
            <person name="Tunggal B."/>
            <person name="Kummerfeld S."/>
            <person name="Madera M."/>
            <person name="Konfortov B.A."/>
            <person name="Rivero F."/>
            <person name="Bankier A.T."/>
            <person name="Lehmann R."/>
            <person name="Hamlin N."/>
            <person name="Davies R."/>
            <person name="Gaudet P."/>
            <person name="Fey P."/>
            <person name="Pilcher K."/>
            <person name="Chen G."/>
            <person name="Saunders D."/>
            <person name="Sodergren E.J."/>
            <person name="Davis P."/>
            <person name="Kerhornou A."/>
            <person name="Nie X."/>
            <person name="Hall N."/>
            <person name="Anjard C."/>
            <person name="Hemphill L."/>
            <person name="Bason N."/>
            <person name="Farbrother P."/>
            <person name="Desany B."/>
            <person name="Just E."/>
            <person name="Morio T."/>
            <person name="Rost R."/>
            <person name="Churcher C.M."/>
            <person name="Cooper J."/>
            <person name="Haydock S."/>
            <person name="van Driessche N."/>
            <person name="Cronin A."/>
            <person name="Goodhead I."/>
            <person name="Muzny D.M."/>
            <person name="Mourier T."/>
            <person name="Pain A."/>
            <person name="Lu M."/>
            <person name="Harper D."/>
            <person name="Lindsay R."/>
            <person name="Hauser H."/>
            <person name="James K.D."/>
            <person name="Quiles M."/>
            <person name="Madan Babu M."/>
            <person name="Saito T."/>
            <person name="Buchrieser C."/>
            <person name="Wardroper A."/>
            <person name="Felder M."/>
            <person name="Thangavelu M."/>
            <person name="Johnson D."/>
            <person name="Knights A."/>
            <person name="Loulseged H."/>
            <person name="Mungall K.L."/>
            <person name="Oliver K."/>
            <person name="Price C."/>
            <person name="Quail M.A."/>
            <person name="Urushihara H."/>
            <person name="Hernandez J."/>
            <person name="Rabbinowitsch E."/>
            <person name="Steffen D."/>
            <person name="Sanders M."/>
            <person name="Ma J."/>
            <person name="Kohara Y."/>
            <person name="Sharp S."/>
            <person name="Simmonds M.N."/>
            <person name="Spiegler S."/>
            <person name="Tivey A."/>
            <person name="Sugano S."/>
            <person name="White B."/>
            <person name="Walker D."/>
            <person name="Woodward J.R."/>
            <person name="Winckler T."/>
            <person name="Tanaka Y."/>
            <person name="Shaulsky G."/>
            <person name="Schleicher M."/>
            <person name="Weinstock G.M."/>
            <person name="Rosenthal A."/>
            <person name="Cox E.C."/>
            <person name="Chisholm R.L."/>
            <person name="Gibbs R.A."/>
            <person name="Loomis W.F."/>
            <person name="Platzer M."/>
            <person name="Kay R.R."/>
            <person name="Williams J.G."/>
            <person name="Dear P.H."/>
            <person name="Noegel A.A."/>
            <person name="Barrell B.G."/>
            <person name="Kuspa A."/>
        </authorList>
    </citation>
    <scope>NUCLEOTIDE SEQUENCE [LARGE SCALE GENOMIC DNA]</scope>
    <source>
        <strain>AX4</strain>
    </source>
</reference>